<dbReference type="EMBL" id="X03109">
    <property type="protein sequence ID" value="CAA26891.1"/>
    <property type="molecule type" value="Genomic_DNA"/>
</dbReference>
<dbReference type="EMBL" id="M92294">
    <property type="protein sequence ID" value="AAA35411.1"/>
    <property type="molecule type" value="Genomic_DNA"/>
</dbReference>
<dbReference type="PIR" id="I36939">
    <property type="entry name" value="HGCZG"/>
</dbReference>
<dbReference type="RefSeq" id="NP_001065247.2">
    <property type="nucleotide sequence ID" value="NM_001071779.2"/>
</dbReference>
<dbReference type="SMR" id="P61921"/>
<dbReference type="FunCoup" id="P61921">
    <property type="interactions" value="11"/>
</dbReference>
<dbReference type="STRING" id="9598.ENSPTRP00000057950"/>
<dbReference type="Ensembl" id="ENSPTRT00000066372.2">
    <property type="protein sequence ID" value="ENSPTRP00000057950.2"/>
    <property type="gene ID" value="ENSPTRG00000043688.1"/>
</dbReference>
<dbReference type="GeneID" id="450979"/>
<dbReference type="KEGG" id="ptr:450979"/>
<dbReference type="CTD" id="3048"/>
<dbReference type="GeneTree" id="ENSGT00940000162659"/>
<dbReference type="InParanoid" id="P61921"/>
<dbReference type="OMA" id="NFKAMYA"/>
<dbReference type="OrthoDB" id="1668at9604"/>
<dbReference type="Proteomes" id="UP000002277">
    <property type="component" value="Chromosome 11"/>
</dbReference>
<dbReference type="Bgee" id="ENSPTRG00000043688">
    <property type="expression patterns" value="Expressed in bone marrow and 11 other cell types or tissues"/>
</dbReference>
<dbReference type="GO" id="GO:0031838">
    <property type="term" value="C:haptoglobin-hemoglobin complex"/>
    <property type="evidence" value="ECO:0000318"/>
    <property type="project" value="GO_Central"/>
</dbReference>
<dbReference type="GO" id="GO:0005833">
    <property type="term" value="C:hemoglobin complex"/>
    <property type="evidence" value="ECO:0000318"/>
    <property type="project" value="GO_Central"/>
</dbReference>
<dbReference type="GO" id="GO:0020037">
    <property type="term" value="F:heme binding"/>
    <property type="evidence" value="ECO:0000318"/>
    <property type="project" value="GO_Central"/>
</dbReference>
<dbReference type="GO" id="GO:0031721">
    <property type="term" value="F:hemoglobin alpha binding"/>
    <property type="evidence" value="ECO:0000318"/>
    <property type="project" value="GO_Central"/>
</dbReference>
<dbReference type="GO" id="GO:0046872">
    <property type="term" value="F:metal ion binding"/>
    <property type="evidence" value="ECO:0007669"/>
    <property type="project" value="UniProtKB-KW"/>
</dbReference>
<dbReference type="GO" id="GO:0019825">
    <property type="term" value="F:oxygen binding"/>
    <property type="evidence" value="ECO:0000318"/>
    <property type="project" value="GO_Central"/>
</dbReference>
<dbReference type="GO" id="GO:0005344">
    <property type="term" value="F:oxygen carrier activity"/>
    <property type="evidence" value="ECO:0000318"/>
    <property type="project" value="GO_Central"/>
</dbReference>
<dbReference type="GO" id="GO:0098869">
    <property type="term" value="P:cellular oxidant detoxification"/>
    <property type="evidence" value="ECO:0007669"/>
    <property type="project" value="GOC"/>
</dbReference>
<dbReference type="GO" id="GO:0042744">
    <property type="term" value="P:hydrogen peroxide catabolic process"/>
    <property type="evidence" value="ECO:0000318"/>
    <property type="project" value="GO_Central"/>
</dbReference>
<dbReference type="CDD" id="cd08925">
    <property type="entry name" value="Hb-beta-like"/>
    <property type="match status" value="1"/>
</dbReference>
<dbReference type="FunFam" id="1.10.490.10:FF:000001">
    <property type="entry name" value="Hemoglobin subunit beta"/>
    <property type="match status" value="1"/>
</dbReference>
<dbReference type="Gene3D" id="1.10.490.10">
    <property type="entry name" value="Globins"/>
    <property type="match status" value="1"/>
</dbReference>
<dbReference type="InterPro" id="IPR000971">
    <property type="entry name" value="Globin"/>
</dbReference>
<dbReference type="InterPro" id="IPR009050">
    <property type="entry name" value="Globin-like_sf"/>
</dbReference>
<dbReference type="InterPro" id="IPR012292">
    <property type="entry name" value="Globin/Proto"/>
</dbReference>
<dbReference type="InterPro" id="IPR002337">
    <property type="entry name" value="Hemoglobin_b"/>
</dbReference>
<dbReference type="InterPro" id="IPR050056">
    <property type="entry name" value="Hemoglobin_oxygen_transport"/>
</dbReference>
<dbReference type="PANTHER" id="PTHR11442">
    <property type="entry name" value="HEMOGLOBIN FAMILY MEMBER"/>
    <property type="match status" value="1"/>
</dbReference>
<dbReference type="PANTHER" id="PTHR11442:SF52">
    <property type="entry name" value="HEMOGLOBIN SUBUNIT GAMMA-1"/>
    <property type="match status" value="1"/>
</dbReference>
<dbReference type="Pfam" id="PF00042">
    <property type="entry name" value="Globin"/>
    <property type="match status" value="1"/>
</dbReference>
<dbReference type="PRINTS" id="PR00814">
    <property type="entry name" value="BETAHAEM"/>
</dbReference>
<dbReference type="SUPFAM" id="SSF46458">
    <property type="entry name" value="Globin-like"/>
    <property type="match status" value="1"/>
</dbReference>
<dbReference type="PROSITE" id="PS01033">
    <property type="entry name" value="GLOBIN"/>
    <property type="match status" value="1"/>
</dbReference>
<comment type="function">
    <text evidence="2">Gamma chains make up the fetal hemoglobin F, in combination with alpha chains.</text>
</comment>
<comment type="subunit">
    <text evidence="2">Heterotetramer of two alpha chains and two gamma chains in fetal hemoglobin (Hb F).</text>
</comment>
<comment type="tissue specificity">
    <text>Red blood cells.</text>
</comment>
<comment type="similarity">
    <text evidence="3">Belongs to the globin family.</text>
</comment>
<protein>
    <recommendedName>
        <fullName>Hemoglobin subunit gamma-2</fullName>
    </recommendedName>
    <alternativeName>
        <fullName>Gamma-2-globin</fullName>
    </alternativeName>
    <alternativeName>
        <fullName>Hemoglobin gamma-2 chain</fullName>
    </alternativeName>
    <alternativeName>
        <fullName>Hemoglobin gamma-G chain</fullName>
    </alternativeName>
</protein>
<feature type="initiator methionine" description="Removed" evidence="2 4">
    <location>
        <position position="1"/>
    </location>
</feature>
<feature type="chain" id="PRO_0000053263" description="Hemoglobin subunit gamma-2">
    <location>
        <begin position="2"/>
        <end position="147"/>
    </location>
</feature>
<feature type="domain" description="Globin" evidence="3">
    <location>
        <begin position="3"/>
        <end position="147"/>
    </location>
</feature>
<feature type="binding site" description="distal binding residue" evidence="3">
    <location>
        <position position="64"/>
    </location>
    <ligand>
        <name>heme b</name>
        <dbReference type="ChEBI" id="CHEBI:60344"/>
    </ligand>
    <ligandPart>
        <name>Fe</name>
        <dbReference type="ChEBI" id="CHEBI:18248"/>
    </ligandPart>
</feature>
<feature type="binding site" description="proximal binding residue" evidence="3">
    <location>
        <position position="93"/>
    </location>
    <ligand>
        <name>heme b</name>
        <dbReference type="ChEBI" id="CHEBI:60344"/>
    </ligand>
    <ligandPart>
        <name>Fe</name>
        <dbReference type="ChEBI" id="CHEBI:18248"/>
    </ligandPart>
</feature>
<feature type="modified residue" description="Phosphothreonine" evidence="1">
    <location>
        <position position="13"/>
    </location>
</feature>
<feature type="modified residue" description="Phosphoserine" evidence="2">
    <location>
        <position position="45"/>
    </location>
</feature>
<feature type="modified residue" description="Phosphoserine" evidence="2">
    <location>
        <position position="51"/>
    </location>
</feature>
<feature type="modified residue" description="Phosphoserine" evidence="2">
    <location>
        <position position="53"/>
    </location>
</feature>
<feature type="modified residue" description="N6-acetyllysine" evidence="1">
    <location>
        <position position="60"/>
    </location>
</feature>
<feature type="modified residue" description="N6-acetyllysine" evidence="1">
    <location>
        <position position="83"/>
    </location>
</feature>
<feature type="modified residue" description="S-nitrosocysteine" evidence="1">
    <location>
        <position position="94"/>
    </location>
</feature>
<feature type="modified residue" description="Phosphoserine" evidence="2">
    <location>
        <position position="140"/>
    </location>
</feature>
<feature type="modified residue" description="Phosphoserine" evidence="2">
    <location>
        <position position="143"/>
    </location>
</feature>
<feature type="modified residue" description="Phosphoserine" evidence="2">
    <location>
        <position position="144"/>
    </location>
</feature>
<reference key="1">
    <citation type="journal article" date="1985" name="Mol. Biol. Evol.">
        <title>Chimpanzee fetal G gamma and A gamma globin gene nucleotide sequences provide further evidence of gene conversions in hominine evolution.</title>
        <authorList>
            <person name="Slightom J.L."/>
            <person name="Chang L.-Y.E."/>
            <person name="Koop B.F."/>
            <person name="Goodman M."/>
        </authorList>
    </citation>
    <scope>NUCLEOTIDE SEQUENCE [GENOMIC DNA]</scope>
</reference>
<reference key="2">
    <citation type="journal article" date="1992" name="Mol. Phylogenet. Evol.">
        <title>Reexamination of the African hominoid trichotomy with additional sequences from the primate beta-globin gene cluster.</title>
        <authorList>
            <person name="Bailey W.J."/>
            <person name="Hayasaka K."/>
            <person name="Skinner C.G."/>
            <person name="Kehoe S."/>
            <person name="Sieu L.C."/>
            <person name="Slightom J.L."/>
            <person name="Goodman M."/>
        </authorList>
    </citation>
    <scope>NUCLEOTIDE SEQUENCE [GENOMIC DNA]</scope>
</reference>
<reference key="3">
    <citation type="journal article" date="1971" name="Biochim. Biophys. Acta">
        <title>Chimpanzee foetal haemoglobin: structure and heterogeneity of the gamma chain.</title>
        <authorList>
            <person name="de Jong W.W.W."/>
        </authorList>
    </citation>
    <scope>PROTEIN SEQUENCE OF 2-147</scope>
</reference>
<sequence>MGHFTEEDKATITSLWGKVNVEDAGGETLGRLLVVYPWTQRFFDSFGNLSSASAIMGNPKVKAHGKKVLTSLGDAIKHLDDLKGTFAQLSELHCDKLHVDPENFKLLGNVLVTVLAIHFGKEFTPEVQASWQKMVTGVASALSSRYH</sequence>
<keyword id="KW-0007">Acetylation</keyword>
<keyword id="KW-0903">Direct protein sequencing</keyword>
<keyword id="KW-0349">Heme</keyword>
<keyword id="KW-0408">Iron</keyword>
<keyword id="KW-0479">Metal-binding</keyword>
<keyword id="KW-0561">Oxygen transport</keyword>
<keyword id="KW-0597">Phosphoprotein</keyword>
<keyword id="KW-1185">Reference proteome</keyword>
<keyword id="KW-0702">S-nitrosylation</keyword>
<keyword id="KW-0813">Transport</keyword>
<name>HBG2_PANTR</name>
<proteinExistence type="evidence at protein level"/>
<accession>P61921</accession>
<accession>P02096</accession>
<organism>
    <name type="scientific">Pan troglodytes</name>
    <name type="common">Chimpanzee</name>
    <dbReference type="NCBI Taxonomy" id="9598"/>
    <lineage>
        <taxon>Eukaryota</taxon>
        <taxon>Metazoa</taxon>
        <taxon>Chordata</taxon>
        <taxon>Craniata</taxon>
        <taxon>Vertebrata</taxon>
        <taxon>Euteleostomi</taxon>
        <taxon>Mammalia</taxon>
        <taxon>Eutheria</taxon>
        <taxon>Euarchontoglires</taxon>
        <taxon>Primates</taxon>
        <taxon>Haplorrhini</taxon>
        <taxon>Catarrhini</taxon>
        <taxon>Hominidae</taxon>
        <taxon>Pan</taxon>
    </lineage>
</organism>
<gene>
    <name type="primary">HBG2</name>
</gene>
<evidence type="ECO:0000250" key="1">
    <source>
        <dbReference type="UniProtKB" id="P68871"/>
    </source>
</evidence>
<evidence type="ECO:0000250" key="2">
    <source>
        <dbReference type="UniProtKB" id="P69892"/>
    </source>
</evidence>
<evidence type="ECO:0000255" key="3">
    <source>
        <dbReference type="PROSITE-ProRule" id="PRU00238"/>
    </source>
</evidence>
<evidence type="ECO:0000269" key="4">
    <source>
    </source>
</evidence>